<reference key="1">
    <citation type="journal article" date="2008" name="BMC Genomics">
        <title>Genomics of an extreme psychrophile, Psychromonas ingrahamii.</title>
        <authorList>
            <person name="Riley M."/>
            <person name="Staley J.T."/>
            <person name="Danchin A."/>
            <person name="Wang T.Z."/>
            <person name="Brettin T.S."/>
            <person name="Hauser L.J."/>
            <person name="Land M.L."/>
            <person name="Thompson L.S."/>
        </authorList>
    </citation>
    <scope>NUCLEOTIDE SEQUENCE [LARGE SCALE GENOMIC DNA]</scope>
    <source>
        <strain>DSM 17664 / CCUG 51855 / 37</strain>
    </source>
</reference>
<keyword id="KW-0030">Aminoacyl-tRNA synthetase</keyword>
<keyword id="KW-0067">ATP-binding</keyword>
<keyword id="KW-0963">Cytoplasm</keyword>
<keyword id="KW-0436">Ligase</keyword>
<keyword id="KW-0547">Nucleotide-binding</keyword>
<keyword id="KW-0648">Protein biosynthesis</keyword>
<keyword id="KW-1185">Reference proteome</keyword>
<accession>A1SST6</accession>
<comment type="function">
    <text evidence="1">Aspartyl-tRNA synthetase with relaxed tRNA specificity since it is able to aspartylate not only its cognate tRNA(Asp) but also tRNA(Asn). Reaction proceeds in two steps: L-aspartate is first activated by ATP to form Asp-AMP and then transferred to the acceptor end of tRNA(Asp/Asn).</text>
</comment>
<comment type="catalytic activity">
    <reaction evidence="1">
        <text>tRNA(Asx) + L-aspartate + ATP = L-aspartyl-tRNA(Asx) + AMP + diphosphate</text>
        <dbReference type="Rhea" id="RHEA:18349"/>
        <dbReference type="Rhea" id="RHEA-COMP:9710"/>
        <dbReference type="Rhea" id="RHEA-COMP:9711"/>
        <dbReference type="ChEBI" id="CHEBI:29991"/>
        <dbReference type="ChEBI" id="CHEBI:30616"/>
        <dbReference type="ChEBI" id="CHEBI:33019"/>
        <dbReference type="ChEBI" id="CHEBI:78442"/>
        <dbReference type="ChEBI" id="CHEBI:78516"/>
        <dbReference type="ChEBI" id="CHEBI:456215"/>
        <dbReference type="EC" id="6.1.1.23"/>
    </reaction>
</comment>
<comment type="subunit">
    <text evidence="1">Homodimer.</text>
</comment>
<comment type="subcellular location">
    <subcellularLocation>
        <location evidence="1">Cytoplasm</location>
    </subcellularLocation>
</comment>
<comment type="similarity">
    <text evidence="1">Belongs to the class-II aminoacyl-tRNA synthetase family. Type 1 subfamily.</text>
</comment>
<feature type="chain" id="PRO_1000006733" description="Aspartate--tRNA(Asp/Asn) ligase">
    <location>
        <begin position="1"/>
        <end position="592"/>
    </location>
</feature>
<feature type="region of interest" description="Aspartate" evidence="1">
    <location>
        <begin position="195"/>
        <end position="198"/>
    </location>
</feature>
<feature type="binding site" evidence="1">
    <location>
        <position position="171"/>
    </location>
    <ligand>
        <name>L-aspartate</name>
        <dbReference type="ChEBI" id="CHEBI:29991"/>
    </ligand>
</feature>
<feature type="binding site" evidence="1">
    <location>
        <begin position="217"/>
        <end position="219"/>
    </location>
    <ligand>
        <name>ATP</name>
        <dbReference type="ChEBI" id="CHEBI:30616"/>
    </ligand>
</feature>
<feature type="binding site" evidence="1">
    <location>
        <position position="217"/>
    </location>
    <ligand>
        <name>L-aspartate</name>
        <dbReference type="ChEBI" id="CHEBI:29991"/>
    </ligand>
</feature>
<feature type="binding site" evidence="1">
    <location>
        <position position="226"/>
    </location>
    <ligand>
        <name>ATP</name>
        <dbReference type="ChEBI" id="CHEBI:30616"/>
    </ligand>
</feature>
<feature type="binding site" evidence="1">
    <location>
        <position position="447"/>
    </location>
    <ligand>
        <name>L-aspartate</name>
        <dbReference type="ChEBI" id="CHEBI:29991"/>
    </ligand>
</feature>
<feature type="binding site" evidence="1">
    <location>
        <position position="481"/>
    </location>
    <ligand>
        <name>ATP</name>
        <dbReference type="ChEBI" id="CHEBI:30616"/>
    </ligand>
</feature>
<feature type="binding site" evidence="1">
    <location>
        <position position="488"/>
    </location>
    <ligand>
        <name>L-aspartate</name>
        <dbReference type="ChEBI" id="CHEBI:29991"/>
    </ligand>
</feature>
<feature type="binding site" evidence="1">
    <location>
        <begin position="533"/>
        <end position="536"/>
    </location>
    <ligand>
        <name>ATP</name>
        <dbReference type="ChEBI" id="CHEBI:30616"/>
    </ligand>
</feature>
<feature type="site" description="Important for tRNA non-discrimination" evidence="1">
    <location>
        <position position="81"/>
    </location>
</feature>
<protein>
    <recommendedName>
        <fullName evidence="1">Aspartate--tRNA(Asp/Asn) ligase</fullName>
        <ecNumber evidence="1">6.1.1.23</ecNumber>
    </recommendedName>
    <alternativeName>
        <fullName evidence="1">Aspartyl-tRNA synthetase</fullName>
        <shortName evidence="1">AspRS</shortName>
    </alternativeName>
    <alternativeName>
        <fullName evidence="1">Non-discriminating aspartyl-tRNA synthetase</fullName>
        <shortName evidence="1">ND-AspRS</shortName>
    </alternativeName>
</protein>
<proteinExistence type="inferred from homology"/>
<evidence type="ECO:0000255" key="1">
    <source>
        <dbReference type="HAMAP-Rule" id="MF_00044"/>
    </source>
</evidence>
<name>SYDND_PSYIN</name>
<dbReference type="EC" id="6.1.1.23" evidence="1"/>
<dbReference type="EMBL" id="CP000510">
    <property type="protein sequence ID" value="ABM02551.1"/>
    <property type="molecule type" value="Genomic_DNA"/>
</dbReference>
<dbReference type="RefSeq" id="WP_011769110.1">
    <property type="nucleotide sequence ID" value="NC_008709.1"/>
</dbReference>
<dbReference type="SMR" id="A1SST6"/>
<dbReference type="STRING" id="357804.Ping_0699"/>
<dbReference type="KEGG" id="pin:Ping_0699"/>
<dbReference type="eggNOG" id="COG0173">
    <property type="taxonomic scope" value="Bacteria"/>
</dbReference>
<dbReference type="HOGENOM" id="CLU_014330_3_2_6"/>
<dbReference type="OrthoDB" id="9802326at2"/>
<dbReference type="Proteomes" id="UP000000639">
    <property type="component" value="Chromosome"/>
</dbReference>
<dbReference type="GO" id="GO:0005737">
    <property type="term" value="C:cytoplasm"/>
    <property type="evidence" value="ECO:0007669"/>
    <property type="project" value="UniProtKB-SubCell"/>
</dbReference>
<dbReference type="GO" id="GO:0004815">
    <property type="term" value="F:aspartate-tRNA ligase activity"/>
    <property type="evidence" value="ECO:0007669"/>
    <property type="project" value="UniProtKB-UniRule"/>
</dbReference>
<dbReference type="GO" id="GO:0050560">
    <property type="term" value="F:aspartate-tRNA(Asn) ligase activity"/>
    <property type="evidence" value="ECO:0007669"/>
    <property type="project" value="UniProtKB-EC"/>
</dbReference>
<dbReference type="GO" id="GO:0005524">
    <property type="term" value="F:ATP binding"/>
    <property type="evidence" value="ECO:0007669"/>
    <property type="project" value="UniProtKB-UniRule"/>
</dbReference>
<dbReference type="GO" id="GO:0003676">
    <property type="term" value="F:nucleic acid binding"/>
    <property type="evidence" value="ECO:0007669"/>
    <property type="project" value="InterPro"/>
</dbReference>
<dbReference type="GO" id="GO:0006422">
    <property type="term" value="P:aspartyl-tRNA aminoacylation"/>
    <property type="evidence" value="ECO:0007669"/>
    <property type="project" value="UniProtKB-UniRule"/>
</dbReference>
<dbReference type="CDD" id="cd00777">
    <property type="entry name" value="AspRS_core"/>
    <property type="match status" value="1"/>
</dbReference>
<dbReference type="CDD" id="cd04317">
    <property type="entry name" value="EcAspRS_like_N"/>
    <property type="match status" value="1"/>
</dbReference>
<dbReference type="Gene3D" id="3.30.930.10">
    <property type="entry name" value="Bira Bifunctional Protein, Domain 2"/>
    <property type="match status" value="1"/>
</dbReference>
<dbReference type="Gene3D" id="3.30.1360.30">
    <property type="entry name" value="GAD-like domain"/>
    <property type="match status" value="1"/>
</dbReference>
<dbReference type="Gene3D" id="2.40.50.140">
    <property type="entry name" value="Nucleic acid-binding proteins"/>
    <property type="match status" value="1"/>
</dbReference>
<dbReference type="HAMAP" id="MF_00044">
    <property type="entry name" value="Asp_tRNA_synth_type1"/>
    <property type="match status" value="1"/>
</dbReference>
<dbReference type="InterPro" id="IPR004364">
    <property type="entry name" value="Aa-tRNA-synt_II"/>
</dbReference>
<dbReference type="InterPro" id="IPR006195">
    <property type="entry name" value="aa-tRNA-synth_II"/>
</dbReference>
<dbReference type="InterPro" id="IPR045864">
    <property type="entry name" value="aa-tRNA-synth_II/BPL/LPL"/>
</dbReference>
<dbReference type="InterPro" id="IPR004524">
    <property type="entry name" value="Asp-tRNA-ligase_1"/>
</dbReference>
<dbReference type="InterPro" id="IPR047089">
    <property type="entry name" value="Asp-tRNA-ligase_1_N"/>
</dbReference>
<dbReference type="InterPro" id="IPR002312">
    <property type="entry name" value="Asp/Asn-tRNA-synth_IIb"/>
</dbReference>
<dbReference type="InterPro" id="IPR047090">
    <property type="entry name" value="AspRS_core"/>
</dbReference>
<dbReference type="InterPro" id="IPR004115">
    <property type="entry name" value="GAD-like_sf"/>
</dbReference>
<dbReference type="InterPro" id="IPR029351">
    <property type="entry name" value="GAD_dom"/>
</dbReference>
<dbReference type="InterPro" id="IPR012340">
    <property type="entry name" value="NA-bd_OB-fold"/>
</dbReference>
<dbReference type="InterPro" id="IPR004365">
    <property type="entry name" value="NA-bd_OB_tRNA"/>
</dbReference>
<dbReference type="NCBIfam" id="TIGR00459">
    <property type="entry name" value="aspS_bact"/>
    <property type="match status" value="1"/>
</dbReference>
<dbReference type="NCBIfam" id="NF001750">
    <property type="entry name" value="PRK00476.1"/>
    <property type="match status" value="1"/>
</dbReference>
<dbReference type="PANTHER" id="PTHR22594:SF5">
    <property type="entry name" value="ASPARTATE--TRNA LIGASE, MITOCHONDRIAL"/>
    <property type="match status" value="1"/>
</dbReference>
<dbReference type="PANTHER" id="PTHR22594">
    <property type="entry name" value="ASPARTYL/LYSYL-TRNA SYNTHETASE"/>
    <property type="match status" value="1"/>
</dbReference>
<dbReference type="Pfam" id="PF02938">
    <property type="entry name" value="GAD"/>
    <property type="match status" value="1"/>
</dbReference>
<dbReference type="Pfam" id="PF00152">
    <property type="entry name" value="tRNA-synt_2"/>
    <property type="match status" value="1"/>
</dbReference>
<dbReference type="Pfam" id="PF01336">
    <property type="entry name" value="tRNA_anti-codon"/>
    <property type="match status" value="1"/>
</dbReference>
<dbReference type="PRINTS" id="PR01042">
    <property type="entry name" value="TRNASYNTHASP"/>
</dbReference>
<dbReference type="SUPFAM" id="SSF55681">
    <property type="entry name" value="Class II aaRS and biotin synthetases"/>
    <property type="match status" value="1"/>
</dbReference>
<dbReference type="SUPFAM" id="SSF55261">
    <property type="entry name" value="GAD domain-like"/>
    <property type="match status" value="1"/>
</dbReference>
<dbReference type="SUPFAM" id="SSF50249">
    <property type="entry name" value="Nucleic acid-binding proteins"/>
    <property type="match status" value="1"/>
</dbReference>
<dbReference type="PROSITE" id="PS50862">
    <property type="entry name" value="AA_TRNA_LIGASE_II"/>
    <property type="match status" value="1"/>
</dbReference>
<organism>
    <name type="scientific">Psychromonas ingrahamii (strain DSM 17664 / CCUG 51855 / 37)</name>
    <dbReference type="NCBI Taxonomy" id="357804"/>
    <lineage>
        <taxon>Bacteria</taxon>
        <taxon>Pseudomonadati</taxon>
        <taxon>Pseudomonadota</taxon>
        <taxon>Gammaproteobacteria</taxon>
        <taxon>Alteromonadales</taxon>
        <taxon>Psychromonadaceae</taxon>
        <taxon>Psychromonas</taxon>
    </lineage>
</organism>
<sequence length="592" mass="65992">MRTMYCGEVTEAVLGQEIQLVGWINKQRDLGGVIFLDMRDRAGIVQVFFDADTPIATALATTVRNEFCIQIKGLVRARPEGQVNKDMTTGGIEILGLELEILNRSEPLPLDSNQQNSEEQRLRYRYLDLRRPEMAKRMQFRAKVSSFVRRFLDDQDFLDVETPILTKATPEGARDYLVPSRTHKGKFFALPQSPQLFKQLLMMSGMDRYYQIVKCFRDEDLRADRQPEFTQIDIETSFMNADQVMEISEEMIVKLFKEMLNVDLGNFPKMTYAEALRRFGSDKPDLRIDFELYDVADLMKDVEFNVFSGPANDPDSRVAVICVPGGAKLSRKNIDEYGKFVTIYGAKGLAWMKVNEVAKGLEGVQSPVAKFLNEEIVTELLIRTGAKDGDIILFGADKSNIVSEAIGALRLKVAQDLGLVKDQWKPLWVIDFPMFEPLDDGGLTPLHHPFTAPIGLTVEELEANPVGAISNAYDMVLNGCELGGGSVRIHKQDMQAAIFRILKISDEEAEDKFGFLLEALKYGAPPHAGLAFGLDRLVMLMTGTSSIRDVIAFPKTASAACPLTNAPSFANPAVLAELNVAVVADPKKVISE</sequence>
<gene>
    <name evidence="1" type="primary">aspS</name>
    <name type="ordered locus">Ping_0699</name>
</gene>